<dbReference type="EMBL" id="CP000114">
    <property type="protein sequence ID" value="ABA45746.1"/>
    <property type="molecule type" value="Genomic_DNA"/>
</dbReference>
<dbReference type="RefSeq" id="WP_000048058.1">
    <property type="nucleotide sequence ID" value="NC_007432.1"/>
</dbReference>
<dbReference type="SMR" id="Q3K081"/>
<dbReference type="GeneID" id="93936799"/>
<dbReference type="KEGG" id="sak:SAK_1464"/>
<dbReference type="HOGENOM" id="CLU_159258_3_2_9"/>
<dbReference type="GO" id="GO:1990904">
    <property type="term" value="C:ribonucleoprotein complex"/>
    <property type="evidence" value="ECO:0007669"/>
    <property type="project" value="UniProtKB-KW"/>
</dbReference>
<dbReference type="GO" id="GO:0005840">
    <property type="term" value="C:ribosome"/>
    <property type="evidence" value="ECO:0007669"/>
    <property type="project" value="UniProtKB-KW"/>
</dbReference>
<dbReference type="GO" id="GO:0003735">
    <property type="term" value="F:structural constituent of ribosome"/>
    <property type="evidence" value="ECO:0007669"/>
    <property type="project" value="InterPro"/>
</dbReference>
<dbReference type="GO" id="GO:0006412">
    <property type="term" value="P:translation"/>
    <property type="evidence" value="ECO:0007669"/>
    <property type="project" value="UniProtKB-UniRule"/>
</dbReference>
<dbReference type="Gene3D" id="1.20.5.1150">
    <property type="entry name" value="Ribosomal protein S8"/>
    <property type="match status" value="1"/>
</dbReference>
<dbReference type="HAMAP" id="MF_00358">
    <property type="entry name" value="Ribosomal_bS21"/>
    <property type="match status" value="1"/>
</dbReference>
<dbReference type="InterPro" id="IPR001911">
    <property type="entry name" value="Ribosomal_bS21"/>
</dbReference>
<dbReference type="InterPro" id="IPR018278">
    <property type="entry name" value="Ribosomal_bS21_CS"/>
</dbReference>
<dbReference type="InterPro" id="IPR038380">
    <property type="entry name" value="Ribosomal_bS21_sf"/>
</dbReference>
<dbReference type="NCBIfam" id="TIGR00030">
    <property type="entry name" value="S21p"/>
    <property type="match status" value="1"/>
</dbReference>
<dbReference type="PANTHER" id="PTHR21109">
    <property type="entry name" value="MITOCHONDRIAL 28S RIBOSOMAL PROTEIN S21"/>
    <property type="match status" value="1"/>
</dbReference>
<dbReference type="PANTHER" id="PTHR21109:SF22">
    <property type="entry name" value="SMALL RIBOSOMAL SUBUNIT PROTEIN BS21"/>
    <property type="match status" value="1"/>
</dbReference>
<dbReference type="Pfam" id="PF01165">
    <property type="entry name" value="Ribosomal_S21"/>
    <property type="match status" value="1"/>
</dbReference>
<dbReference type="PRINTS" id="PR00976">
    <property type="entry name" value="RIBOSOMALS21"/>
</dbReference>
<dbReference type="PROSITE" id="PS01181">
    <property type="entry name" value="RIBOSOMAL_S21"/>
    <property type="match status" value="1"/>
</dbReference>
<accession>Q3K081</accession>
<proteinExistence type="inferred from homology"/>
<comment type="similarity">
    <text evidence="1">Belongs to the bacterial ribosomal protein bS21 family.</text>
</comment>
<feature type="chain" id="PRO_0000266776" description="Small ribosomal subunit protein bS21">
    <location>
        <begin position="1"/>
        <end position="58"/>
    </location>
</feature>
<feature type="region of interest" description="Disordered" evidence="2">
    <location>
        <begin position="36"/>
        <end position="58"/>
    </location>
</feature>
<feature type="compositionally biased region" description="Basic residues" evidence="2">
    <location>
        <begin position="43"/>
        <end position="58"/>
    </location>
</feature>
<name>RS21_STRA1</name>
<gene>
    <name evidence="1" type="primary">rpsU</name>
    <name type="ordered locus">SAK_1464</name>
</gene>
<organism>
    <name type="scientific">Streptococcus agalactiae serotype Ia (strain ATCC 27591 / A909 / CDC SS700)</name>
    <dbReference type="NCBI Taxonomy" id="205921"/>
    <lineage>
        <taxon>Bacteria</taxon>
        <taxon>Bacillati</taxon>
        <taxon>Bacillota</taxon>
        <taxon>Bacilli</taxon>
        <taxon>Lactobacillales</taxon>
        <taxon>Streptococcaceae</taxon>
        <taxon>Streptococcus</taxon>
    </lineage>
</organism>
<reference key="1">
    <citation type="journal article" date="2005" name="Proc. Natl. Acad. Sci. U.S.A.">
        <title>Genome analysis of multiple pathogenic isolates of Streptococcus agalactiae: implications for the microbial 'pan-genome'.</title>
        <authorList>
            <person name="Tettelin H."/>
            <person name="Masignani V."/>
            <person name="Cieslewicz M.J."/>
            <person name="Donati C."/>
            <person name="Medini D."/>
            <person name="Ward N.L."/>
            <person name="Angiuoli S.V."/>
            <person name="Crabtree J."/>
            <person name="Jones A.L."/>
            <person name="Durkin A.S."/>
            <person name="DeBoy R.T."/>
            <person name="Davidsen T.M."/>
            <person name="Mora M."/>
            <person name="Scarselli M."/>
            <person name="Margarit y Ros I."/>
            <person name="Peterson J.D."/>
            <person name="Hauser C.R."/>
            <person name="Sundaram J.P."/>
            <person name="Nelson W.C."/>
            <person name="Madupu R."/>
            <person name="Brinkac L.M."/>
            <person name="Dodson R.J."/>
            <person name="Rosovitz M.J."/>
            <person name="Sullivan S.A."/>
            <person name="Daugherty S.C."/>
            <person name="Haft D.H."/>
            <person name="Selengut J."/>
            <person name="Gwinn M.L."/>
            <person name="Zhou L."/>
            <person name="Zafar N."/>
            <person name="Khouri H."/>
            <person name="Radune D."/>
            <person name="Dimitrov G."/>
            <person name="Watkins K."/>
            <person name="O'Connor K.J."/>
            <person name="Smith S."/>
            <person name="Utterback T.R."/>
            <person name="White O."/>
            <person name="Rubens C.E."/>
            <person name="Grandi G."/>
            <person name="Madoff L.C."/>
            <person name="Kasper D.L."/>
            <person name="Telford J.L."/>
            <person name="Wessels M.R."/>
            <person name="Rappuoli R."/>
            <person name="Fraser C.M."/>
        </authorList>
    </citation>
    <scope>NUCLEOTIDE SEQUENCE [LARGE SCALE GENOMIC DNA]</scope>
    <source>
        <strain>ATCC 27591 / A909 / CDC SS700</strain>
    </source>
</reference>
<evidence type="ECO:0000255" key="1">
    <source>
        <dbReference type="HAMAP-Rule" id="MF_00358"/>
    </source>
</evidence>
<evidence type="ECO:0000256" key="2">
    <source>
        <dbReference type="SAM" id="MobiDB-lite"/>
    </source>
</evidence>
<evidence type="ECO:0000305" key="3"/>
<sequence>MSKTVVRKNESLDDALRRFKRSVTKAGTLQESRKREFYEKPSVKRKRKSEAARKRKKF</sequence>
<protein>
    <recommendedName>
        <fullName evidence="1">Small ribosomal subunit protein bS21</fullName>
    </recommendedName>
    <alternativeName>
        <fullName evidence="3">30S ribosomal protein S21</fullName>
    </alternativeName>
</protein>
<keyword id="KW-0687">Ribonucleoprotein</keyword>
<keyword id="KW-0689">Ribosomal protein</keyword>